<evidence type="ECO:0000250" key="1">
    <source>
        <dbReference type="UniProtKB" id="Q8BMK4"/>
    </source>
</evidence>
<evidence type="ECO:0000255" key="2"/>
<evidence type="ECO:0000256" key="3">
    <source>
        <dbReference type="SAM" id="MobiDB-lite"/>
    </source>
</evidence>
<evidence type="ECO:0000269" key="4">
    <source>
    </source>
</evidence>
<evidence type="ECO:0000269" key="5">
    <source>
    </source>
</evidence>
<evidence type="ECO:0000269" key="6">
    <source>
    </source>
</evidence>
<evidence type="ECO:0000269" key="7">
    <source>
    </source>
</evidence>
<evidence type="ECO:0000269" key="8">
    <source>
    </source>
</evidence>
<evidence type="ECO:0000269" key="9">
    <source>
    </source>
</evidence>
<evidence type="ECO:0000269" key="10">
    <source>
    </source>
</evidence>
<evidence type="ECO:0000305" key="11"/>
<evidence type="ECO:0007744" key="12">
    <source>
    </source>
</evidence>
<evidence type="ECO:0007744" key="13">
    <source>
    </source>
</evidence>
<feature type="chain" id="PRO_0000252417" description="Cytoskeleton-associated protein 4">
    <location>
        <begin position="1"/>
        <end position="602"/>
    </location>
</feature>
<feature type="topological domain" description="Cytoplasmic" evidence="2">
    <location>
        <begin position="1"/>
        <end position="106"/>
    </location>
</feature>
<feature type="transmembrane region" description="Helical" evidence="2">
    <location>
        <begin position="107"/>
        <end position="127"/>
    </location>
</feature>
<feature type="topological domain" description="Extracellular" evidence="2">
    <location>
        <begin position="128"/>
        <end position="602"/>
    </location>
</feature>
<feature type="region of interest" description="Disordered" evidence="3">
    <location>
        <begin position="1"/>
        <end position="83"/>
    </location>
</feature>
<feature type="coiled-coil region" evidence="2">
    <location>
        <begin position="130"/>
        <end position="214"/>
    </location>
</feature>
<feature type="coiled-coil region" evidence="2">
    <location>
        <begin position="256"/>
        <end position="460"/>
    </location>
</feature>
<feature type="coiled-coil region" evidence="2">
    <location>
        <begin position="533"/>
        <end position="602"/>
    </location>
</feature>
<feature type="compositionally biased region" description="Pro residues" evidence="3">
    <location>
        <begin position="35"/>
        <end position="52"/>
    </location>
</feature>
<feature type="compositionally biased region" description="Low complexity" evidence="3">
    <location>
        <begin position="53"/>
        <end position="64"/>
    </location>
</feature>
<feature type="modified residue" description="Phosphoserine" evidence="4">
    <location>
        <position position="3"/>
    </location>
</feature>
<feature type="modified residue" description="Phosphoserine" evidence="4 13">
    <location>
        <position position="17"/>
    </location>
</feature>
<feature type="modified residue" description="Phosphoserine" evidence="4">
    <location>
        <position position="19"/>
    </location>
</feature>
<feature type="modified residue" description="N6-acetyllysine" evidence="1">
    <location>
        <position position="21"/>
    </location>
</feature>
<feature type="modified residue" description="Phosphoserine; by FAM20C" evidence="8">
    <location>
        <position position="232"/>
    </location>
</feature>
<feature type="modified residue" description="Phosphoserine" evidence="12">
    <location>
        <position position="312"/>
    </location>
</feature>
<feature type="lipid moiety-binding region" description="S-palmitoyl cysteine; by ZDHHC2" evidence="6 7">
    <location>
        <position position="100"/>
    </location>
</feature>
<feature type="sequence variant" id="VAR_027853" description="In dbSNP:rs3088113.">
    <original>A</original>
    <variation>T</variation>
    <location>
        <position position="348"/>
    </location>
</feature>
<feature type="sequence conflict" description="In Ref. 2; BAD97283." evidence="11" ref="2">
    <original>Q</original>
    <variation>R</variation>
    <location>
        <position position="60"/>
    </location>
</feature>
<feature type="sequence conflict" description="In Ref. 4; AAH94824." evidence="11" ref="4">
    <original>S</original>
    <variation>P</variation>
    <location>
        <position position="362"/>
    </location>
</feature>
<gene>
    <name type="primary">CKAP4</name>
</gene>
<reference key="1">
    <citation type="journal article" date="1993" name="J. Cell Sci.">
        <title>A reversibly palmitoylated resident protein(p63) of an ER-Golgi intermediate compartment is related to a circulatory shock resuscitation protein.</title>
        <authorList>
            <person name="Schweizer A."/>
            <person name="Rohrer J."/>
            <person name="Jenoe P."/>
            <person name="De Maio A."/>
            <person name="Buchman T.G."/>
            <person name="Hauri H.-P."/>
        </authorList>
    </citation>
    <scope>NUCLEOTIDE SEQUENCE [MRNA]</scope>
    <scope>PROTEIN SEQUENCE OF 312-326; 413-429 AND 491-504</scope>
    <scope>SUBCELLULAR LOCATION</scope>
    <scope>PALMITOYLATION</scope>
    <source>
        <tissue>Placenta</tissue>
    </source>
</reference>
<reference key="2">
    <citation type="submission" date="2005-04" db="EMBL/GenBank/DDBJ databases">
        <authorList>
            <person name="Totoki Y."/>
            <person name="Toyoda A."/>
            <person name="Takeda T."/>
            <person name="Sakaki Y."/>
            <person name="Tanaka A."/>
            <person name="Yokoyama S."/>
        </authorList>
    </citation>
    <scope>NUCLEOTIDE SEQUENCE [LARGE SCALE MRNA]</scope>
    <source>
        <tissue>Spleen</tissue>
    </source>
</reference>
<reference key="3">
    <citation type="journal article" date="2006" name="Nature">
        <title>The finished DNA sequence of human chromosome 12.</title>
        <authorList>
            <person name="Scherer S.E."/>
            <person name="Muzny D.M."/>
            <person name="Buhay C.J."/>
            <person name="Chen R."/>
            <person name="Cree A."/>
            <person name="Ding Y."/>
            <person name="Dugan-Rocha S."/>
            <person name="Gill R."/>
            <person name="Gunaratne P."/>
            <person name="Harris R.A."/>
            <person name="Hawes A.C."/>
            <person name="Hernandez J."/>
            <person name="Hodgson A.V."/>
            <person name="Hume J."/>
            <person name="Jackson A."/>
            <person name="Khan Z.M."/>
            <person name="Kovar-Smith C."/>
            <person name="Lewis L.R."/>
            <person name="Lozado R.J."/>
            <person name="Metzker M.L."/>
            <person name="Milosavljevic A."/>
            <person name="Miner G.R."/>
            <person name="Montgomery K.T."/>
            <person name="Morgan M.B."/>
            <person name="Nazareth L.V."/>
            <person name="Scott G."/>
            <person name="Sodergren E."/>
            <person name="Song X.-Z."/>
            <person name="Steffen D."/>
            <person name="Lovering R.C."/>
            <person name="Wheeler D.A."/>
            <person name="Worley K.C."/>
            <person name="Yuan Y."/>
            <person name="Zhang Z."/>
            <person name="Adams C.Q."/>
            <person name="Ansari-Lari M.A."/>
            <person name="Ayele M."/>
            <person name="Brown M.J."/>
            <person name="Chen G."/>
            <person name="Chen Z."/>
            <person name="Clerc-Blankenburg K.P."/>
            <person name="Davis C."/>
            <person name="Delgado O."/>
            <person name="Dinh H.H."/>
            <person name="Draper H."/>
            <person name="Gonzalez-Garay M.L."/>
            <person name="Havlak P."/>
            <person name="Jackson L.R."/>
            <person name="Jacob L.S."/>
            <person name="Kelly S.H."/>
            <person name="Li L."/>
            <person name="Li Z."/>
            <person name="Liu J."/>
            <person name="Liu W."/>
            <person name="Lu J."/>
            <person name="Maheshwari M."/>
            <person name="Nguyen B.-V."/>
            <person name="Okwuonu G.O."/>
            <person name="Pasternak S."/>
            <person name="Perez L.M."/>
            <person name="Plopper F.J.H."/>
            <person name="Santibanez J."/>
            <person name="Shen H."/>
            <person name="Tabor P.E."/>
            <person name="Verduzco D."/>
            <person name="Waldron L."/>
            <person name="Wang Q."/>
            <person name="Williams G.A."/>
            <person name="Zhang J."/>
            <person name="Zhou J."/>
            <person name="Allen C.C."/>
            <person name="Amin A.G."/>
            <person name="Anyalebechi V."/>
            <person name="Bailey M."/>
            <person name="Barbaria J.A."/>
            <person name="Bimage K.E."/>
            <person name="Bryant N.P."/>
            <person name="Burch P.E."/>
            <person name="Burkett C.E."/>
            <person name="Burrell K.L."/>
            <person name="Calderon E."/>
            <person name="Cardenas V."/>
            <person name="Carter K."/>
            <person name="Casias K."/>
            <person name="Cavazos I."/>
            <person name="Cavazos S.R."/>
            <person name="Ceasar H."/>
            <person name="Chacko J."/>
            <person name="Chan S.N."/>
            <person name="Chavez D."/>
            <person name="Christopoulos C."/>
            <person name="Chu J."/>
            <person name="Cockrell R."/>
            <person name="Cox C.D."/>
            <person name="Dang M."/>
            <person name="Dathorne S.R."/>
            <person name="David R."/>
            <person name="Davis C.M."/>
            <person name="Davy-Carroll L."/>
            <person name="Deshazo D.R."/>
            <person name="Donlin J.E."/>
            <person name="D'Souza L."/>
            <person name="Eaves K.A."/>
            <person name="Egan A."/>
            <person name="Emery-Cohen A.J."/>
            <person name="Escotto M."/>
            <person name="Flagg N."/>
            <person name="Forbes L.D."/>
            <person name="Gabisi A.M."/>
            <person name="Garza M."/>
            <person name="Hamilton C."/>
            <person name="Henderson N."/>
            <person name="Hernandez O."/>
            <person name="Hines S."/>
            <person name="Hogues M.E."/>
            <person name="Huang M."/>
            <person name="Idlebird D.G."/>
            <person name="Johnson R."/>
            <person name="Jolivet A."/>
            <person name="Jones S."/>
            <person name="Kagan R."/>
            <person name="King L.M."/>
            <person name="Leal B."/>
            <person name="Lebow H."/>
            <person name="Lee S."/>
            <person name="LeVan J.M."/>
            <person name="Lewis L.C."/>
            <person name="London P."/>
            <person name="Lorensuhewa L.M."/>
            <person name="Loulseged H."/>
            <person name="Lovett D.A."/>
            <person name="Lucier A."/>
            <person name="Lucier R.L."/>
            <person name="Ma J."/>
            <person name="Madu R.C."/>
            <person name="Mapua P."/>
            <person name="Martindale A.D."/>
            <person name="Martinez E."/>
            <person name="Massey E."/>
            <person name="Mawhiney S."/>
            <person name="Meador M.G."/>
            <person name="Mendez S."/>
            <person name="Mercado C."/>
            <person name="Mercado I.C."/>
            <person name="Merritt C.E."/>
            <person name="Miner Z.L."/>
            <person name="Minja E."/>
            <person name="Mitchell T."/>
            <person name="Mohabbat F."/>
            <person name="Mohabbat K."/>
            <person name="Montgomery B."/>
            <person name="Moore N."/>
            <person name="Morris S."/>
            <person name="Munidasa M."/>
            <person name="Ngo R.N."/>
            <person name="Nguyen N.B."/>
            <person name="Nickerson E."/>
            <person name="Nwaokelemeh O.O."/>
            <person name="Nwokenkwo S."/>
            <person name="Obregon M."/>
            <person name="Oguh M."/>
            <person name="Oragunye N."/>
            <person name="Oviedo R.J."/>
            <person name="Parish B.J."/>
            <person name="Parker D.N."/>
            <person name="Parrish J."/>
            <person name="Parks K.L."/>
            <person name="Paul H.A."/>
            <person name="Payton B.A."/>
            <person name="Perez A."/>
            <person name="Perrin W."/>
            <person name="Pickens A."/>
            <person name="Primus E.L."/>
            <person name="Pu L.-L."/>
            <person name="Puazo M."/>
            <person name="Quiles M.M."/>
            <person name="Quiroz J.B."/>
            <person name="Rabata D."/>
            <person name="Reeves K."/>
            <person name="Ruiz S.J."/>
            <person name="Shao H."/>
            <person name="Sisson I."/>
            <person name="Sonaike T."/>
            <person name="Sorelle R.P."/>
            <person name="Sutton A.E."/>
            <person name="Svatek A.F."/>
            <person name="Svetz L.A."/>
            <person name="Tamerisa K.S."/>
            <person name="Taylor T.R."/>
            <person name="Teague B."/>
            <person name="Thomas N."/>
            <person name="Thorn R.D."/>
            <person name="Trejos Z.Y."/>
            <person name="Trevino B.K."/>
            <person name="Ukegbu O.N."/>
            <person name="Urban J.B."/>
            <person name="Vasquez L.I."/>
            <person name="Vera V.A."/>
            <person name="Villasana D.M."/>
            <person name="Wang L."/>
            <person name="Ward-Moore S."/>
            <person name="Warren J.T."/>
            <person name="Wei X."/>
            <person name="White F."/>
            <person name="Williamson A.L."/>
            <person name="Wleczyk R."/>
            <person name="Wooden H.S."/>
            <person name="Wooden S.H."/>
            <person name="Yen J."/>
            <person name="Yoon L."/>
            <person name="Yoon V."/>
            <person name="Zorrilla S.E."/>
            <person name="Nelson D."/>
            <person name="Kucherlapati R."/>
            <person name="Weinstock G."/>
            <person name="Gibbs R.A."/>
        </authorList>
    </citation>
    <scope>NUCLEOTIDE SEQUENCE [LARGE SCALE GENOMIC DNA]</scope>
</reference>
<reference key="4">
    <citation type="journal article" date="2004" name="Genome Res.">
        <title>The status, quality, and expansion of the NIH full-length cDNA project: the Mammalian Gene Collection (MGC).</title>
        <authorList>
            <consortium name="The MGC Project Team"/>
        </authorList>
    </citation>
    <scope>NUCLEOTIDE SEQUENCE [LARGE SCALE MRNA]</scope>
    <source>
        <tissue>Lung</tissue>
        <tissue>Pancreas</tissue>
    </source>
</reference>
<reference key="5">
    <citation type="journal article" date="2005" name="Mol. Biol. Cell">
        <title>Phosphorylation controls CLIMP-63-mediated anchoring of the endoplasmic reticulum to microtubules.</title>
        <authorList>
            <person name="Vedrenne C."/>
            <person name="Klopfenstein D.R."/>
            <person name="Hauri H.P."/>
        </authorList>
    </citation>
    <scope>FUNCTION IN CYTOSKELETON ANCHORING</scope>
    <scope>PHOSPHORYLATION AT SER-3; SER-17 AND SER-19</scope>
</reference>
<reference key="6">
    <citation type="journal article" date="2006" name="Cell">
        <title>Global, in vivo, and site-specific phosphorylation dynamics in signaling networks.</title>
        <authorList>
            <person name="Olsen J.V."/>
            <person name="Blagoev B."/>
            <person name="Gnad F."/>
            <person name="Macek B."/>
            <person name="Kumar C."/>
            <person name="Mortensen P."/>
            <person name="Mann M."/>
        </authorList>
    </citation>
    <scope>IDENTIFICATION BY MASS SPECTROMETRY [LARGE SCALE ANALYSIS]</scope>
    <source>
        <tissue>Cervix carcinoma</tissue>
    </source>
</reference>
<reference key="7">
    <citation type="journal article" date="2006" name="J. Biol. Chem.">
        <title>CKAP4/p63 is a receptor for the frizzled-8 protein-related antiproliferative factor from interstitial cystitis patients.</title>
        <authorList>
            <person name="Conrads T.P."/>
            <person name="Tocci G.M."/>
            <person name="Hood B.L."/>
            <person name="Zhang C.O."/>
            <person name="Guo L."/>
            <person name="Koch K.R."/>
            <person name="Michejda C.J."/>
            <person name="Veenstra T.D."/>
            <person name="Keay S.K."/>
        </authorList>
    </citation>
    <scope>FUNCTION AS APF RECEPTOR</scope>
    <scope>SUBCELLULAR LOCATION</scope>
</reference>
<reference key="8">
    <citation type="journal article" date="2007" name="J. Cell Sci.">
        <title>Climp-63-mediated binding of microtubules to the ER affects the lateral mobility of translocon complexes.</title>
        <authorList>
            <person name="Nikonov A.V."/>
            <person name="Hauri H.P."/>
            <person name="Lauring B."/>
            <person name="Kreibich G."/>
        </authorList>
    </citation>
    <scope>FUNCTION IN CYTOSKELETON ANCHORING</scope>
    <scope>SUBCELLULAR LOCATION</scope>
</reference>
<reference key="9">
    <citation type="journal article" date="2008" name="Mol. Cell. Proteomics">
        <title>Identification of CKAP4/p63 as a major substrate of the palmitoyl acyltransferase DHHC2, a putative tumor suppressor, using a novel proteomics method.</title>
        <authorList>
            <person name="Zhang J."/>
            <person name="Planey S.L."/>
            <person name="Ceballos C."/>
            <person name="Stevens S.M. Jr."/>
            <person name="Keay S.K."/>
            <person name="Zacharias D.A."/>
        </authorList>
    </citation>
    <scope>PROTEIN SEQUENCE OF 79-102</scope>
    <scope>SUBCELLULAR LOCATION</scope>
    <scope>PALMITOYLATION AT CYS-100</scope>
</reference>
<reference key="10">
    <citation type="journal article" date="2008" name="Proc. Natl. Acad. Sci. U.S.A.">
        <title>A quantitative atlas of mitotic phosphorylation.</title>
        <authorList>
            <person name="Dephoure N."/>
            <person name="Zhou C."/>
            <person name="Villen J."/>
            <person name="Beausoleil S.A."/>
            <person name="Bakalarski C.E."/>
            <person name="Elledge S.J."/>
            <person name="Gygi S.P."/>
        </authorList>
    </citation>
    <scope>PHOSPHORYLATION [LARGE SCALE ANALYSIS] AT SER-312</scope>
    <scope>IDENTIFICATION BY MASS SPECTROMETRY [LARGE SCALE ANALYSIS]</scope>
    <source>
        <tissue>Cervix carcinoma</tissue>
    </source>
</reference>
<reference key="11">
    <citation type="journal article" date="2009" name="Mol. Biol. Cell">
        <title>Palmitoylation of cytoskeleton associated protein 4 by DHHC2 regulates antiproliferative factor-mediated signaling.</title>
        <authorList>
            <person name="Planey S.L."/>
            <person name="Keay S.K."/>
            <person name="Zhang C.O."/>
            <person name="Zacharias D.A."/>
        </authorList>
    </citation>
    <scope>FUNCTION</scope>
    <scope>SUBCELLULAR LOCATION</scope>
    <scope>PALMITOYLATION AT CYS-100 BY ZDHHC2</scope>
</reference>
<reference key="12">
    <citation type="journal article" date="2010" name="Sci. Signal.">
        <title>Quantitative phosphoproteomics reveals widespread full phosphorylation site occupancy during mitosis.</title>
        <authorList>
            <person name="Olsen J.V."/>
            <person name="Vermeulen M."/>
            <person name="Santamaria A."/>
            <person name="Kumar C."/>
            <person name="Miller M.L."/>
            <person name="Jensen L.J."/>
            <person name="Gnad F."/>
            <person name="Cox J."/>
            <person name="Jensen T.S."/>
            <person name="Nigg E.A."/>
            <person name="Brunak S."/>
            <person name="Mann M."/>
        </authorList>
    </citation>
    <scope>PHOSPHORYLATION [LARGE SCALE ANALYSIS] AT SER-17</scope>
    <scope>IDENTIFICATION BY MASS SPECTROMETRY [LARGE SCALE ANALYSIS]</scope>
    <source>
        <tissue>Cervix carcinoma</tissue>
    </source>
</reference>
<reference key="13">
    <citation type="journal article" date="2011" name="BMC Syst. Biol.">
        <title>Initial characterization of the human central proteome.</title>
        <authorList>
            <person name="Burkard T.R."/>
            <person name="Planyavsky M."/>
            <person name="Kaupe I."/>
            <person name="Breitwieser F.P."/>
            <person name="Buerckstuemmer T."/>
            <person name="Bennett K.L."/>
            <person name="Superti-Furga G."/>
            <person name="Colinge J."/>
        </authorList>
    </citation>
    <scope>IDENTIFICATION BY MASS SPECTROMETRY [LARGE SCALE ANALYSIS]</scope>
</reference>
<reference key="14">
    <citation type="journal article" date="2014" name="J. Proteomics">
        <title>An enzyme assisted RP-RPLC approach for in-depth analysis of human liver phosphoproteome.</title>
        <authorList>
            <person name="Bian Y."/>
            <person name="Song C."/>
            <person name="Cheng K."/>
            <person name="Dong M."/>
            <person name="Wang F."/>
            <person name="Huang J."/>
            <person name="Sun D."/>
            <person name="Wang L."/>
            <person name="Ye M."/>
            <person name="Zou H."/>
        </authorList>
    </citation>
    <scope>IDENTIFICATION BY MASS SPECTROMETRY [LARGE SCALE ANALYSIS]</scope>
    <source>
        <tissue>Liver</tissue>
    </source>
</reference>
<reference key="15">
    <citation type="journal article" date="2015" name="Cell">
        <title>A single kinase generates the majority of the secreted phosphoproteome.</title>
        <authorList>
            <person name="Tagliabracci V.S."/>
            <person name="Wiley S.E."/>
            <person name="Guo X."/>
            <person name="Kinch L.N."/>
            <person name="Durrant E."/>
            <person name="Wen J."/>
            <person name="Xiao J."/>
            <person name="Cui J."/>
            <person name="Nguyen K.B."/>
            <person name="Engel J.L."/>
            <person name="Coon J.J."/>
            <person name="Grishin N."/>
            <person name="Pinna L.A."/>
            <person name="Pagliarini D.J."/>
            <person name="Dixon J.E."/>
        </authorList>
    </citation>
    <scope>PHOSPHORYLATION AT SER-232</scope>
</reference>
<reference key="16">
    <citation type="journal article" date="2015" name="Proteomics">
        <title>N-terminome analysis of the human mitochondrial proteome.</title>
        <authorList>
            <person name="Vaca Jacome A.S."/>
            <person name="Rabilloud T."/>
            <person name="Schaeffer-Reiss C."/>
            <person name="Rompais M."/>
            <person name="Ayoub D."/>
            <person name="Lane L."/>
            <person name="Bairoch A."/>
            <person name="Van Dorsselaer A."/>
            <person name="Carapito C."/>
        </authorList>
    </citation>
    <scope>IDENTIFICATION BY MASS SPECTROMETRY [LARGE SCALE ANALYSIS]</scope>
</reference>
<reference key="17">
    <citation type="journal article" date="2020" name="Nat. Commun.">
        <title>REEP5 depletion causes sarco-endoplasmic reticulum vacuolization and cardiac functional defects.</title>
        <authorList>
            <person name="Lee S.H."/>
            <person name="Hadipour-Lakmehsari S."/>
            <person name="Murthy H.R."/>
            <person name="Gibb N."/>
            <person name="Miyake T."/>
            <person name="Teng A.C.T."/>
            <person name="Cosme J."/>
            <person name="Yu J.C."/>
            <person name="Moon M."/>
            <person name="Lim S."/>
            <person name="Wong V."/>
            <person name="Liu P."/>
            <person name="Billia F."/>
            <person name="Fernandez-Gonzalez R."/>
            <person name="Stagljar I."/>
            <person name="Sharma P."/>
            <person name="Kislinger T."/>
            <person name="Scott I.C."/>
            <person name="Gramolini A.O."/>
        </authorList>
    </citation>
    <scope>INTERACTION WITH REEP5</scope>
</reference>
<dbReference type="EMBL" id="X69910">
    <property type="protein sequence ID" value="CAA49535.2"/>
    <property type="molecule type" value="mRNA"/>
</dbReference>
<dbReference type="EMBL" id="AK223563">
    <property type="protein sequence ID" value="BAD97283.1"/>
    <property type="molecule type" value="mRNA"/>
</dbReference>
<dbReference type="EMBL" id="AC079174">
    <property type="status" value="NOT_ANNOTATED_CDS"/>
    <property type="molecule type" value="Genomic_DNA"/>
</dbReference>
<dbReference type="EMBL" id="BC082972">
    <property type="protein sequence ID" value="AAH82972.1"/>
    <property type="molecule type" value="mRNA"/>
</dbReference>
<dbReference type="EMBL" id="BC094824">
    <property type="protein sequence ID" value="AAH94824.1"/>
    <property type="status" value="ALT_SEQ"/>
    <property type="molecule type" value="mRNA"/>
</dbReference>
<dbReference type="CCDS" id="CCDS9103.1"/>
<dbReference type="PIR" id="S33377">
    <property type="entry name" value="S33377"/>
</dbReference>
<dbReference type="RefSeq" id="NP_006816.2">
    <property type="nucleotide sequence ID" value="NM_006825.3"/>
</dbReference>
<dbReference type="SMR" id="Q07065"/>
<dbReference type="BioGRID" id="116167">
    <property type="interactions" value="651"/>
</dbReference>
<dbReference type="FunCoup" id="Q07065">
    <property type="interactions" value="485"/>
</dbReference>
<dbReference type="IntAct" id="Q07065">
    <property type="interactions" value="212"/>
</dbReference>
<dbReference type="MINT" id="Q07065"/>
<dbReference type="STRING" id="9606.ENSP00000367265"/>
<dbReference type="ChEMBL" id="CHEMBL4296025"/>
<dbReference type="TCDB" id="8.A.149.1.1">
    <property type="family name" value="the cytoskeleton-associated protein 4 (ckap4) family"/>
</dbReference>
<dbReference type="GlyGen" id="Q07065">
    <property type="glycosylation" value="7 sites, 2 O-linked glycans (5 sites)"/>
</dbReference>
<dbReference type="iPTMnet" id="Q07065"/>
<dbReference type="PhosphoSitePlus" id="Q07065"/>
<dbReference type="SwissPalm" id="Q07065"/>
<dbReference type="BioMuta" id="CKAP4"/>
<dbReference type="DMDM" id="74735614"/>
<dbReference type="CPTAC" id="CPTAC-335"/>
<dbReference type="CPTAC" id="CPTAC-336"/>
<dbReference type="jPOST" id="Q07065"/>
<dbReference type="MassIVE" id="Q07065"/>
<dbReference type="PaxDb" id="9606-ENSP00000367265"/>
<dbReference type="PeptideAtlas" id="Q07065"/>
<dbReference type="ProteomicsDB" id="58501"/>
<dbReference type="Pumba" id="Q07065"/>
<dbReference type="ABCD" id="Q07065">
    <property type="antibodies" value="1 sequenced antibody"/>
</dbReference>
<dbReference type="Antibodypedia" id="613">
    <property type="antibodies" value="299 antibodies from 34 providers"/>
</dbReference>
<dbReference type="DNASU" id="10970"/>
<dbReference type="Ensembl" id="ENST00000378026.5">
    <property type="protein sequence ID" value="ENSP00000367265.4"/>
    <property type="gene ID" value="ENSG00000136026.14"/>
</dbReference>
<dbReference type="GeneID" id="10970"/>
<dbReference type="KEGG" id="hsa:10970"/>
<dbReference type="MANE-Select" id="ENST00000378026.5">
    <property type="protein sequence ID" value="ENSP00000367265.4"/>
    <property type="RefSeq nucleotide sequence ID" value="NM_006825.4"/>
    <property type="RefSeq protein sequence ID" value="NP_006816.2"/>
</dbReference>
<dbReference type="UCSC" id="uc001tlk.4">
    <property type="organism name" value="human"/>
</dbReference>
<dbReference type="AGR" id="HGNC:16991"/>
<dbReference type="CTD" id="10970"/>
<dbReference type="DisGeNET" id="10970"/>
<dbReference type="GeneCards" id="CKAP4"/>
<dbReference type="HGNC" id="HGNC:16991">
    <property type="gene designation" value="CKAP4"/>
</dbReference>
<dbReference type="HPA" id="ENSG00000136026">
    <property type="expression patterns" value="Low tissue specificity"/>
</dbReference>
<dbReference type="MIM" id="618595">
    <property type="type" value="gene"/>
</dbReference>
<dbReference type="neXtProt" id="NX_Q07065"/>
<dbReference type="OpenTargets" id="ENSG00000136026"/>
<dbReference type="PharmGKB" id="PA26527"/>
<dbReference type="VEuPathDB" id="HostDB:ENSG00000136026"/>
<dbReference type="eggNOG" id="ENOG502QVCP">
    <property type="taxonomic scope" value="Eukaryota"/>
</dbReference>
<dbReference type="GeneTree" id="ENSGT00390000015968"/>
<dbReference type="HOGENOM" id="CLU_032481_0_0_1"/>
<dbReference type="InParanoid" id="Q07065"/>
<dbReference type="OMA" id="GFSGWCV"/>
<dbReference type="OrthoDB" id="9944809at2759"/>
<dbReference type="PAN-GO" id="Q07065">
    <property type="GO annotations" value="1 GO annotation based on evolutionary models"/>
</dbReference>
<dbReference type="PhylomeDB" id="Q07065"/>
<dbReference type="TreeFam" id="TF332395"/>
<dbReference type="PathwayCommons" id="Q07065"/>
<dbReference type="Reactome" id="R-HSA-381426">
    <property type="pathway name" value="Regulation of Insulin-like Growth Factor (IGF) transport and uptake by Insulin-like Growth Factor Binding Proteins (IGFBPs)"/>
</dbReference>
<dbReference type="Reactome" id="R-HSA-5683826">
    <property type="pathway name" value="Surfactant metabolism"/>
</dbReference>
<dbReference type="Reactome" id="R-HSA-6798695">
    <property type="pathway name" value="Neutrophil degranulation"/>
</dbReference>
<dbReference type="Reactome" id="R-HSA-8957275">
    <property type="pathway name" value="Post-translational protein phosphorylation"/>
</dbReference>
<dbReference type="Reactome" id="R-HSA-9696264">
    <property type="pathway name" value="RND3 GTPase cycle"/>
</dbReference>
<dbReference type="Reactome" id="R-HSA-9696270">
    <property type="pathway name" value="RND2 GTPase cycle"/>
</dbReference>
<dbReference type="SignaLink" id="Q07065"/>
<dbReference type="BioGRID-ORCS" id="10970">
    <property type="hits" value="15 hits in 1153 CRISPR screens"/>
</dbReference>
<dbReference type="CD-CODE" id="FB4E32DD">
    <property type="entry name" value="Presynaptic clusters and postsynaptic densities"/>
</dbReference>
<dbReference type="ChiTaRS" id="CKAP4">
    <property type="organism name" value="human"/>
</dbReference>
<dbReference type="GeneWiki" id="CKAP4"/>
<dbReference type="GenomeRNAi" id="10970"/>
<dbReference type="Pharos" id="Q07065">
    <property type="development level" value="Tbio"/>
</dbReference>
<dbReference type="PRO" id="PR:Q07065"/>
<dbReference type="Proteomes" id="UP000005640">
    <property type="component" value="Chromosome 12"/>
</dbReference>
<dbReference type="RNAct" id="Q07065">
    <property type="molecule type" value="protein"/>
</dbReference>
<dbReference type="Bgee" id="ENSG00000136026">
    <property type="expression patterns" value="Expressed in tibia and 211 other cell types or tissues"/>
</dbReference>
<dbReference type="ExpressionAtlas" id="Q07065">
    <property type="expression patterns" value="baseline and differential"/>
</dbReference>
<dbReference type="GO" id="GO:0035577">
    <property type="term" value="C:azurophil granule membrane"/>
    <property type="evidence" value="ECO:0000304"/>
    <property type="project" value="Reactome"/>
</dbReference>
<dbReference type="GO" id="GO:0005856">
    <property type="term" value="C:cytoskeleton"/>
    <property type="evidence" value="ECO:0007669"/>
    <property type="project" value="UniProtKB-SubCell"/>
</dbReference>
<dbReference type="GO" id="GO:0005783">
    <property type="term" value="C:endoplasmic reticulum"/>
    <property type="evidence" value="ECO:0000314"/>
    <property type="project" value="UniProtKB"/>
</dbReference>
<dbReference type="GO" id="GO:0005788">
    <property type="term" value="C:endoplasmic reticulum lumen"/>
    <property type="evidence" value="ECO:0000304"/>
    <property type="project" value="Reactome"/>
</dbReference>
<dbReference type="GO" id="GO:0005789">
    <property type="term" value="C:endoplasmic reticulum membrane"/>
    <property type="evidence" value="ECO:0007669"/>
    <property type="project" value="UniProtKB-SubCell"/>
</dbReference>
<dbReference type="GO" id="GO:0070062">
    <property type="term" value="C:extracellular exosome"/>
    <property type="evidence" value="ECO:0007005"/>
    <property type="project" value="UniProtKB"/>
</dbReference>
<dbReference type="GO" id="GO:0042599">
    <property type="term" value="C:lamellar body"/>
    <property type="evidence" value="ECO:0000304"/>
    <property type="project" value="Reactome"/>
</dbReference>
<dbReference type="GO" id="GO:0005811">
    <property type="term" value="C:lipid droplet"/>
    <property type="evidence" value="ECO:0000314"/>
    <property type="project" value="UniProtKB"/>
</dbReference>
<dbReference type="GO" id="GO:0016020">
    <property type="term" value="C:membrane"/>
    <property type="evidence" value="ECO:0000304"/>
    <property type="project" value="ProtInc"/>
</dbReference>
<dbReference type="GO" id="GO:0005739">
    <property type="term" value="C:mitochondrion"/>
    <property type="evidence" value="ECO:0000314"/>
    <property type="project" value="HPA"/>
</dbReference>
<dbReference type="GO" id="GO:0016607">
    <property type="term" value="C:nuclear speck"/>
    <property type="evidence" value="ECO:0000314"/>
    <property type="project" value="HPA"/>
</dbReference>
<dbReference type="GO" id="GO:0048471">
    <property type="term" value="C:perinuclear region of cytoplasm"/>
    <property type="evidence" value="ECO:0007669"/>
    <property type="project" value="UniProtKB-SubCell"/>
</dbReference>
<dbReference type="GO" id="GO:0005886">
    <property type="term" value="C:plasma membrane"/>
    <property type="evidence" value="ECO:0000304"/>
    <property type="project" value="Reactome"/>
</dbReference>
<dbReference type="GO" id="GO:0005791">
    <property type="term" value="C:rough endoplasmic reticulum"/>
    <property type="evidence" value="ECO:0000314"/>
    <property type="project" value="UniProtKB"/>
</dbReference>
<dbReference type="GO" id="GO:0035579">
    <property type="term" value="C:specific granule membrane"/>
    <property type="evidence" value="ECO:0000304"/>
    <property type="project" value="Reactome"/>
</dbReference>
<dbReference type="GO" id="GO:0003723">
    <property type="term" value="F:RNA binding"/>
    <property type="evidence" value="ECO:0007005"/>
    <property type="project" value="UniProtKB"/>
</dbReference>
<dbReference type="Gene3D" id="1.10.287.1490">
    <property type="match status" value="1"/>
</dbReference>
<dbReference type="PANTHER" id="PTHR45161">
    <property type="entry name" value="CYTOSKELETON-ASSOCIATED PROTEIN 4"/>
    <property type="match status" value="1"/>
</dbReference>
<dbReference type="PANTHER" id="PTHR45161:SF1">
    <property type="entry name" value="CYTOSKELETON-ASSOCIATED PROTEIN 4"/>
    <property type="match status" value="1"/>
</dbReference>
<comment type="function">
    <text evidence="4">Mediates the anchoring of the endoplasmic reticulum to microtubules.</text>
</comment>
<comment type="function">
    <text evidence="5 7">High-affinity epithelial cell surface receptor for the FZD8-related low molecular weight sialoglycopeptide APF/antiproliferative factor. Mediates the APF antiproliferative signaling within cells.</text>
</comment>
<comment type="subunit">
    <text evidence="9">Interacts with REEP5.</text>
</comment>
<comment type="interaction">
    <interactant intactId="EBI-702400">
        <id>Q07065</id>
    </interactant>
    <interactant intactId="EBI-2340657">
        <id>P50876</id>
        <label>RNF144A</label>
    </interactant>
    <organismsDiffer>false</organismsDiffer>
    <experiments>2</experiments>
</comment>
<comment type="interaction">
    <interactant intactId="EBI-702400">
        <id>Q07065</id>
    </interactant>
    <interactant intactId="EBI-11288011">
        <id>Q5BJH7</id>
        <label>YIF1B</label>
    </interactant>
    <organismsDiffer>false</organismsDiffer>
    <experiments>2</experiments>
</comment>
<comment type="subcellular location">
    <subcellularLocation>
        <location evidence="6 7">Endoplasmic reticulum membrane</location>
        <topology>Single-pass type II membrane protein</topology>
    </subcellularLocation>
    <subcellularLocation>
        <location evidence="6 7">Cell membrane</location>
        <topology>Single-pass type II membrane protein</topology>
    </subcellularLocation>
    <subcellularLocation>
        <location>Cytoplasm</location>
        <location>Cytoskeleton</location>
    </subcellularLocation>
    <subcellularLocation>
        <location>Cytoplasm</location>
        <location>Perinuclear region</location>
    </subcellularLocation>
    <text>Translocates to the perinuclear region upon APF-stimulation.</text>
</comment>
<comment type="PTM">
    <text evidence="6 7 10">Reversibly palmitoylated. Palmitoylation at Cys-100 by ZDHHC2 is required for its trafficking from the ER to the plasma membrane and for its perinuclear localization. Palmitoylation by ZDHHC2 is also required for its function in APF-mediated antiproliferative signaling (PubMed:19144824).</text>
</comment>
<comment type="PTM">
    <text evidence="4">Increased phosphorylation during mitosis prevents binding to microtubules.</text>
</comment>
<comment type="sequence caution" evidence="11">
    <conflict type="miscellaneous discrepancy">
        <sequence resource="EMBL-CDS" id="AAH94824"/>
    </conflict>
    <text>Aberrant splicing.</text>
</comment>
<name>CKAP4_HUMAN</name>
<proteinExistence type="evidence at protein level"/>
<sequence length="602" mass="66022">MPSAKQRGSKGGHGAASPSEKGAHPSGGADDVAKKPPPAPQQPPPPPAPHPQQHPQQHPQNQAHGKGGHRGGGGGGGKSSSSSSASAAAAAAAASSSASCSRRLGRALNFLFYLALVAAAAFSGWCVHHVLEEVQQVRRSHQDFSRQREELGQGLQGVEQKVQSLQATFGTFESILRSSQHKQDLTEKAVKQGESEVSRISEVLQKLQNEILKDLSDGIHVVKDARERDFTSLENTVEERLTELTKSINDNIAIFTEVQKRSQKEINDMKAKVASLEESEGNKQDLKALKEAVKEIQTSAKSREWDMEALRSTLQTMESDIYTEVRELVSLKQEQQAFKEAADTERLALQALTEKLLRSEESVSRLPEEIRRLEEELRQLKSDSHGPKEDGGFRHSEAFEALQQKSQGLDSRLQHVEDGVLSMQVASARQTESLESLLSKSQEHEQRLAALQGRLEGLGSSEADQDGLASTVRSLGETQLVLYGDVEELKRSVGELPSTVESLQKVQEQVHTLLSQDQAQAARLPPQDFLDRLSSLDNLKASVSQVEADLKMLRTAVDSLVAYSVKIETNENNLESAKGLLDDLRNDLDRLFVKVEKIHEKV</sequence>
<accession>Q07065</accession>
<accession>Q504S5</accession>
<accession>Q53ES6</accession>
<organism>
    <name type="scientific">Homo sapiens</name>
    <name type="common">Human</name>
    <dbReference type="NCBI Taxonomy" id="9606"/>
    <lineage>
        <taxon>Eukaryota</taxon>
        <taxon>Metazoa</taxon>
        <taxon>Chordata</taxon>
        <taxon>Craniata</taxon>
        <taxon>Vertebrata</taxon>
        <taxon>Euteleostomi</taxon>
        <taxon>Mammalia</taxon>
        <taxon>Eutheria</taxon>
        <taxon>Euarchontoglires</taxon>
        <taxon>Primates</taxon>
        <taxon>Haplorrhini</taxon>
        <taxon>Catarrhini</taxon>
        <taxon>Hominidae</taxon>
        <taxon>Homo</taxon>
    </lineage>
</organism>
<keyword id="KW-0007">Acetylation</keyword>
<keyword id="KW-1003">Cell membrane</keyword>
<keyword id="KW-0175">Coiled coil</keyword>
<keyword id="KW-0963">Cytoplasm</keyword>
<keyword id="KW-0206">Cytoskeleton</keyword>
<keyword id="KW-0903">Direct protein sequencing</keyword>
<keyword id="KW-0256">Endoplasmic reticulum</keyword>
<keyword id="KW-0449">Lipoprotein</keyword>
<keyword id="KW-0472">Membrane</keyword>
<keyword id="KW-0564">Palmitate</keyword>
<keyword id="KW-0597">Phosphoprotein</keyword>
<keyword id="KW-1267">Proteomics identification</keyword>
<keyword id="KW-1185">Reference proteome</keyword>
<keyword id="KW-0735">Signal-anchor</keyword>
<keyword id="KW-0812">Transmembrane</keyword>
<keyword id="KW-1133">Transmembrane helix</keyword>
<protein>
    <recommendedName>
        <fullName>Cytoskeleton-associated protein 4</fullName>
    </recommendedName>
    <alternativeName>
        <fullName>63-kDa cytoskeleton-linking membrane protein</fullName>
        <shortName>Climp-63</shortName>
        <shortName>p63</shortName>
    </alternativeName>
</protein>